<proteinExistence type="evidence at transcript level"/>
<dbReference type="EMBL" id="AK420788">
    <property type="protein sequence ID" value="BAN39376.1"/>
    <property type="molecule type" value="mRNA"/>
</dbReference>
<dbReference type="EMBL" id="L02418">
    <property type="protein sequence ID" value="AAA29101.1"/>
    <property type="molecule type" value="Genomic_DNA"/>
</dbReference>
<dbReference type="EMBL" id="DS571203">
    <property type="protein sequence ID" value="EAL46273.1"/>
    <property type="molecule type" value="Genomic_DNA"/>
</dbReference>
<dbReference type="RefSeq" id="XP_651659.1">
    <property type="nucleotide sequence ID" value="XM_646567.2"/>
</dbReference>
<dbReference type="SMR" id="Q06196"/>
<dbReference type="STRING" id="5759.C4M0Z4"/>
<dbReference type="EnsemblProtists" id="GAT94852">
    <property type="protein sequence ID" value="GAT94852"/>
    <property type="gene ID" value="CL6EHI_135080"/>
</dbReference>
<dbReference type="EnsemblProtists" id="rna_EHI_135080-1">
    <property type="protein sequence ID" value="rna_EHI_135080-1"/>
    <property type="gene ID" value="EHI_135080"/>
</dbReference>
<dbReference type="GeneID" id="3405967"/>
<dbReference type="KEGG" id="ehi:EHI_135080"/>
<dbReference type="VEuPathDB" id="AmoebaDB:EHI5A_009610"/>
<dbReference type="VEuPathDB" id="AmoebaDB:EHI7A_018000"/>
<dbReference type="VEuPathDB" id="AmoebaDB:EHI8A_002440"/>
<dbReference type="VEuPathDB" id="AmoebaDB:EHI_135080"/>
<dbReference type="VEuPathDB" id="AmoebaDB:KM1_008280"/>
<dbReference type="eggNOG" id="KOG1745">
    <property type="taxonomic scope" value="Eukaryota"/>
</dbReference>
<dbReference type="HOGENOM" id="CLU_078295_4_1_1"/>
<dbReference type="OMA" id="DSNRCAI"/>
<dbReference type="OrthoDB" id="30128at2759"/>
<dbReference type="Proteomes" id="UP000001926">
    <property type="component" value="Partially assembled WGS sequence"/>
</dbReference>
<dbReference type="GO" id="GO:0000786">
    <property type="term" value="C:nucleosome"/>
    <property type="evidence" value="ECO:0007669"/>
    <property type="project" value="UniProtKB-KW"/>
</dbReference>
<dbReference type="GO" id="GO:0005634">
    <property type="term" value="C:nucleus"/>
    <property type="evidence" value="ECO:0000318"/>
    <property type="project" value="GO_Central"/>
</dbReference>
<dbReference type="GO" id="GO:0003677">
    <property type="term" value="F:DNA binding"/>
    <property type="evidence" value="ECO:0007669"/>
    <property type="project" value="UniProtKB-KW"/>
</dbReference>
<dbReference type="GO" id="GO:0046982">
    <property type="term" value="F:protein heterodimerization activity"/>
    <property type="evidence" value="ECO:0007669"/>
    <property type="project" value="InterPro"/>
</dbReference>
<dbReference type="GO" id="GO:0030527">
    <property type="term" value="F:structural constituent of chromatin"/>
    <property type="evidence" value="ECO:0007669"/>
    <property type="project" value="InterPro"/>
</dbReference>
<dbReference type="CDD" id="cd22911">
    <property type="entry name" value="HFD_H3"/>
    <property type="match status" value="1"/>
</dbReference>
<dbReference type="FunFam" id="1.10.20.10:FF:000081">
    <property type="entry name" value="Histone H3, putative"/>
    <property type="match status" value="1"/>
</dbReference>
<dbReference type="Gene3D" id="1.10.20.10">
    <property type="entry name" value="Histone, subunit A"/>
    <property type="match status" value="1"/>
</dbReference>
<dbReference type="InterPro" id="IPR009072">
    <property type="entry name" value="Histone-fold"/>
</dbReference>
<dbReference type="InterPro" id="IPR007125">
    <property type="entry name" value="Histone_H2A/H2B/H3"/>
</dbReference>
<dbReference type="InterPro" id="IPR000164">
    <property type="entry name" value="Histone_H3/CENP-A"/>
</dbReference>
<dbReference type="PANTHER" id="PTHR11426">
    <property type="entry name" value="HISTONE H3"/>
    <property type="match status" value="1"/>
</dbReference>
<dbReference type="Pfam" id="PF00125">
    <property type="entry name" value="Histone"/>
    <property type="match status" value="1"/>
</dbReference>
<dbReference type="PRINTS" id="PR00622">
    <property type="entry name" value="HISTONEH3"/>
</dbReference>
<dbReference type="SMART" id="SM00428">
    <property type="entry name" value="H3"/>
    <property type="match status" value="1"/>
</dbReference>
<dbReference type="SUPFAM" id="SSF47113">
    <property type="entry name" value="Histone-fold"/>
    <property type="match status" value="1"/>
</dbReference>
<dbReference type="PROSITE" id="PS00959">
    <property type="entry name" value="HISTONE_H3_2"/>
    <property type="match status" value="1"/>
</dbReference>
<accession>Q06196</accession>
<accession>A0A175JN17</accession>
<accession>C4M0Z4</accession>
<accession>S0AYU8</accession>
<feature type="initiator methionine" description="Removed" evidence="1">
    <location>
        <position position="1"/>
    </location>
</feature>
<feature type="chain" id="PRO_0000221353" description="Histone H3">
    <location>
        <begin position="2"/>
        <end position="135"/>
    </location>
</feature>
<comment type="function">
    <text>Core component of nucleosome. Nucleosomes wrap and compact DNA into chromatin, limiting DNA accessibility to the cellular machineries which require DNA as a template. Histones thereby play a central role in transcription regulation, DNA repair, DNA replication and chromosomal stability. DNA accessibility is regulated via a complex set of post-translational modifications of histones, also called histone code, and nucleosome remodeling.</text>
</comment>
<comment type="subunit">
    <text>The nucleosome is a histone octamer containing two molecules each of H2A, H2B, H3 and H4 assembled in one H3-H4 heterotetramer and two H2A-H2B heterodimers. The octamer wraps approximately 147 bp of DNA.</text>
</comment>
<comment type="subcellular location">
    <subcellularLocation>
        <location>Nucleus</location>
    </subcellularLocation>
    <subcellularLocation>
        <location>Chromosome</location>
    </subcellularLocation>
</comment>
<comment type="similarity">
    <text evidence="3">Belongs to the histone H3 family.</text>
</comment>
<reference evidence="5" key="1">
    <citation type="submission" date="2012-06" db="EMBL/GenBank/DDBJ databases">
        <title>Short 5' UTR of Entamoeba genes.</title>
        <authorList>
            <person name="Hiranuka K."/>
            <person name="Kumagai M."/>
            <person name="Wakaguri H."/>
            <person name="Suzuki Y."/>
            <person name="Sugano S."/>
            <person name="Watanabe J."/>
            <person name="Makioka A."/>
        </authorList>
    </citation>
    <scope>NUCLEOTIDE SEQUENCE [MRNA]</scope>
    <source>
        <strain evidence="5">ATCC 30459 / HM-1:IMSS / ABRM</strain>
    </source>
</reference>
<reference evidence="4" key="2">
    <citation type="journal article" date="1993" name="Mol. Biochem. Parasitol.">
        <title>Pathogenic Entamoeba histolytica: cDNA cloning of a histone H3 with a divergent primary structure.</title>
        <authorList>
            <person name="Foedinger M."/>
            <person name="Ortner S."/>
            <person name="Plaimauer B."/>
            <person name="Wiedermann G."/>
            <person name="Scheiner O."/>
            <person name="Duchene M."/>
        </authorList>
    </citation>
    <scope>NUCLEOTIDE SEQUENCE [GENOMIC DNA]</scope>
    <source>
        <strain evidence="4">SFL-3</strain>
    </source>
</reference>
<reference evidence="6" key="3">
    <citation type="journal article" date="2005" name="Nature">
        <title>The genome of the protist parasite Entamoeba histolytica.</title>
        <authorList>
            <person name="Loftus B.J."/>
            <person name="Anderson I."/>
            <person name="Davies R."/>
            <person name="Alsmark U.C."/>
            <person name="Samuelson J."/>
            <person name="Amedeo P."/>
            <person name="Roncaglia P."/>
            <person name="Berriman M."/>
            <person name="Hirt R.P."/>
            <person name="Mann B.J."/>
            <person name="Nozaki T."/>
            <person name="Suh B."/>
            <person name="Pop M."/>
            <person name="Duchene M."/>
            <person name="Ackers J."/>
            <person name="Tannich E."/>
            <person name="Leippe M."/>
            <person name="Hofer M."/>
            <person name="Bruchhaus I."/>
            <person name="Willhoeft U."/>
            <person name="Bhattacharya A."/>
            <person name="Chillingworth T."/>
            <person name="Churcher C.M."/>
            <person name="Hance Z."/>
            <person name="Harris B."/>
            <person name="Harris D."/>
            <person name="Jagels K."/>
            <person name="Moule S."/>
            <person name="Mungall K.L."/>
            <person name="Ormond D."/>
            <person name="Squares R."/>
            <person name="Whitehead S."/>
            <person name="Quail M.A."/>
            <person name="Rabbinowitsch E."/>
            <person name="Norbertczak H."/>
            <person name="Price C."/>
            <person name="Wang Z."/>
            <person name="Guillen N."/>
            <person name="Gilchrist C."/>
            <person name="Stroup S.E."/>
            <person name="Bhattacharya S."/>
            <person name="Lohia A."/>
            <person name="Foster P.G."/>
            <person name="Sicheritz-Ponten T."/>
            <person name="Weber C."/>
            <person name="Singh U."/>
            <person name="Mukherjee C."/>
            <person name="El-Sayed N.M.A."/>
            <person name="Petri W.A."/>
            <person name="Clark C.G."/>
            <person name="Embley T.M."/>
            <person name="Barrell B.G."/>
            <person name="Fraser C.M."/>
            <person name="Hall N."/>
        </authorList>
    </citation>
    <scope>NUCLEOTIDE SEQUENCE [LARGE SCALE GENOMIC DNA]</scope>
    <source>
        <strain evidence="6">ATCC 30459 / HM-1:IMSS / ABRM</strain>
    </source>
</reference>
<organism evidence="6">
    <name type="scientific">Entamoeba histolytica (strain ATCC 30459 / HM-1:IMSS / ABRM)</name>
    <dbReference type="NCBI Taxonomy" id="294381"/>
    <lineage>
        <taxon>Eukaryota</taxon>
        <taxon>Amoebozoa</taxon>
        <taxon>Evosea</taxon>
        <taxon>Archamoebae</taxon>
        <taxon>Mastigamoebida</taxon>
        <taxon>Entamoebidae</taxon>
        <taxon>Entamoeba</taxon>
    </lineage>
</organism>
<keyword id="KW-0158">Chromosome</keyword>
<keyword id="KW-0238">DNA-binding</keyword>
<keyword id="KW-0544">Nucleosome core</keyword>
<keyword id="KW-0539">Nucleus</keyword>
<keyword id="KW-1185">Reference proteome</keyword>
<protein>
    <recommendedName>
        <fullName evidence="2">Histone H3</fullName>
    </recommendedName>
</protein>
<name>H3_ENTH1</name>
<sequence>MARTKGHIERPSNKSAKAVKNVAFKAAKKMLSKDSTKKKRAHPGAVALTEIKVLQRSTELLLRKAPFQALVREIAQVSKSDLRFQSAAISALQEAAEAYLVGLFEDTNLCAIHAKRITIMPKDMQLARRIRGERT</sequence>
<evidence type="ECO:0000250" key="1"/>
<evidence type="ECO:0000303" key="2">
    <source>
    </source>
</evidence>
<evidence type="ECO:0000305" key="3"/>
<evidence type="ECO:0000312" key="4">
    <source>
        <dbReference type="EMBL" id="AAA29101.1"/>
    </source>
</evidence>
<evidence type="ECO:0000312" key="5">
    <source>
        <dbReference type="EMBL" id="BAN39376.1"/>
    </source>
</evidence>
<evidence type="ECO:0000312" key="6">
    <source>
        <dbReference type="EMBL" id="EAL46273.1"/>
    </source>
</evidence>
<gene>
    <name type="primary">H3</name>
    <name evidence="6" type="ORF">EHI_135080</name>
</gene>